<gene>
    <name type="primary">fliS</name>
    <name type="ordered locus">PA1095</name>
</gene>
<keyword id="KW-1005">Bacterial flagellum biogenesis</keyword>
<keyword id="KW-0143">Chaperone</keyword>
<keyword id="KW-0963">Cytoplasm</keyword>
<keyword id="KW-1185">Reference proteome</keyword>
<reference key="1">
    <citation type="journal article" date="2000" name="Nature">
        <title>Complete genome sequence of Pseudomonas aeruginosa PAO1, an opportunistic pathogen.</title>
        <authorList>
            <person name="Stover C.K."/>
            <person name="Pham X.-Q.T."/>
            <person name="Erwin A.L."/>
            <person name="Mizoguchi S.D."/>
            <person name="Warrener P."/>
            <person name="Hickey M.J."/>
            <person name="Brinkman F.S.L."/>
            <person name="Hufnagle W.O."/>
            <person name="Kowalik D.J."/>
            <person name="Lagrou M."/>
            <person name="Garber R.L."/>
            <person name="Goltry L."/>
            <person name="Tolentino E."/>
            <person name="Westbrock-Wadman S."/>
            <person name="Yuan Y."/>
            <person name="Brody L.L."/>
            <person name="Coulter S.N."/>
            <person name="Folger K.R."/>
            <person name="Kas A."/>
            <person name="Larbig K."/>
            <person name="Lim R.M."/>
            <person name="Smith K.A."/>
            <person name="Spencer D.H."/>
            <person name="Wong G.K.-S."/>
            <person name="Wu Z."/>
            <person name="Paulsen I.T."/>
            <person name="Reizer J."/>
            <person name="Saier M.H. Jr."/>
            <person name="Hancock R.E.W."/>
            <person name="Lory S."/>
            <person name="Olson M.V."/>
        </authorList>
    </citation>
    <scope>NUCLEOTIDE SEQUENCE [LARGE SCALE GENOMIC DNA]</scope>
    <source>
        <strain>ATCC 15692 / DSM 22644 / CIP 104116 / JCM 14847 / LMG 12228 / 1C / PRS 101 / PAO1</strain>
    </source>
</reference>
<comment type="subcellular location">
    <subcellularLocation>
        <location evidence="1">Cytoplasm</location>
        <location evidence="1">Cytosol</location>
    </subcellularLocation>
</comment>
<comment type="similarity">
    <text evidence="1">Belongs to the FliS family.</text>
</comment>
<name>FLISB_PSEAE</name>
<dbReference type="EMBL" id="AE004091">
    <property type="protein sequence ID" value="AAG04484.1"/>
    <property type="molecule type" value="Genomic_DNA"/>
</dbReference>
<dbReference type="PIR" id="H83507">
    <property type="entry name" value="H83507"/>
</dbReference>
<dbReference type="RefSeq" id="NP_249786.1">
    <property type="nucleotide sequence ID" value="NC_002516.2"/>
</dbReference>
<dbReference type="RefSeq" id="WP_003082192.1">
    <property type="nucleotide sequence ID" value="NZ_QZGE01000006.1"/>
</dbReference>
<dbReference type="SMR" id="Q9I4N6"/>
<dbReference type="FunCoup" id="Q9I4N6">
    <property type="interactions" value="74"/>
</dbReference>
<dbReference type="STRING" id="208964.PA1095"/>
<dbReference type="PaxDb" id="208964-PA1095"/>
<dbReference type="DNASU" id="881896"/>
<dbReference type="GeneID" id="881896"/>
<dbReference type="KEGG" id="pae:PA1095"/>
<dbReference type="PATRIC" id="fig|208964.12.peg.1134"/>
<dbReference type="PseudoCAP" id="PA1095"/>
<dbReference type="HOGENOM" id="CLU_080373_1_2_6"/>
<dbReference type="InParanoid" id="Q9I4N6"/>
<dbReference type="OrthoDB" id="9792010at2"/>
<dbReference type="PhylomeDB" id="Q9I4N6"/>
<dbReference type="BioCyc" id="PAER208964:G1FZ6-1118-MONOMER"/>
<dbReference type="Proteomes" id="UP000002438">
    <property type="component" value="Chromosome"/>
</dbReference>
<dbReference type="GO" id="GO:0005829">
    <property type="term" value="C:cytosol"/>
    <property type="evidence" value="ECO:0007669"/>
    <property type="project" value="UniProtKB-SubCell"/>
</dbReference>
<dbReference type="GO" id="GO:0044780">
    <property type="term" value="P:bacterial-type flagellum assembly"/>
    <property type="evidence" value="ECO:0007669"/>
    <property type="project" value="InterPro"/>
</dbReference>
<dbReference type="GO" id="GO:0071973">
    <property type="term" value="P:bacterial-type flagellum-dependent cell motility"/>
    <property type="evidence" value="ECO:0000318"/>
    <property type="project" value="GO_Central"/>
</dbReference>
<dbReference type="CDD" id="cd16098">
    <property type="entry name" value="FliS"/>
    <property type="match status" value="1"/>
</dbReference>
<dbReference type="FunFam" id="1.20.120.340:FF:000001">
    <property type="entry name" value="Flagellar secretion chaperone FliS"/>
    <property type="match status" value="1"/>
</dbReference>
<dbReference type="Gene3D" id="1.20.120.340">
    <property type="entry name" value="Flagellar protein FliS"/>
    <property type="match status" value="1"/>
</dbReference>
<dbReference type="InterPro" id="IPR003713">
    <property type="entry name" value="FliS"/>
</dbReference>
<dbReference type="InterPro" id="IPR036584">
    <property type="entry name" value="FliS_sf"/>
</dbReference>
<dbReference type="NCBIfam" id="TIGR00208">
    <property type="entry name" value="fliS"/>
    <property type="match status" value="1"/>
</dbReference>
<dbReference type="PANTHER" id="PTHR34773">
    <property type="entry name" value="FLAGELLAR SECRETION CHAPERONE FLIS"/>
    <property type="match status" value="1"/>
</dbReference>
<dbReference type="PANTHER" id="PTHR34773:SF1">
    <property type="entry name" value="FLAGELLAR SECRETION CHAPERONE FLIS"/>
    <property type="match status" value="1"/>
</dbReference>
<dbReference type="Pfam" id="PF02561">
    <property type="entry name" value="FliS"/>
    <property type="match status" value="1"/>
</dbReference>
<dbReference type="PIRSF" id="PIRSF039090">
    <property type="entry name" value="Flis"/>
    <property type="match status" value="1"/>
</dbReference>
<dbReference type="SUPFAM" id="SSF101116">
    <property type="entry name" value="Flagellar export chaperone FliS"/>
    <property type="match status" value="1"/>
</dbReference>
<proteinExistence type="inferred from homology"/>
<accession>Q9I4N6</accession>
<feature type="chain" id="PRO_0000180972" description="Flagellar secretion chaperone FliSB">
    <location>
        <begin position="1"/>
        <end position="126"/>
    </location>
</feature>
<protein>
    <recommendedName>
        <fullName>Flagellar secretion chaperone FliSB</fullName>
    </recommendedName>
    <alternativeName>
        <fullName>B-type flagellar protein FliS</fullName>
    </alternativeName>
</protein>
<sequence length="126" mass="13840">MYAMKAMKQYQQVSIEAQVSDANPHRLIQLLMQGGLERLAQARGAMEREQIPEKGILIGKAIGIIGGLREALDSERGGELAGNLDRLYEYMIARLVEANTSNDTSLLDEVSALLLEVKSGWDGISH</sequence>
<evidence type="ECO:0000305" key="1"/>
<organism>
    <name type="scientific">Pseudomonas aeruginosa (strain ATCC 15692 / DSM 22644 / CIP 104116 / JCM 14847 / LMG 12228 / 1C / PRS 101 / PAO1)</name>
    <dbReference type="NCBI Taxonomy" id="208964"/>
    <lineage>
        <taxon>Bacteria</taxon>
        <taxon>Pseudomonadati</taxon>
        <taxon>Pseudomonadota</taxon>
        <taxon>Gammaproteobacteria</taxon>
        <taxon>Pseudomonadales</taxon>
        <taxon>Pseudomonadaceae</taxon>
        <taxon>Pseudomonas</taxon>
    </lineage>
</organism>